<dbReference type="EMBL" id="CP000263">
    <property type="protein sequence ID" value="ABJ90789.1"/>
    <property type="molecule type" value="Genomic_DNA"/>
</dbReference>
<dbReference type="RefSeq" id="WP_011672708.1">
    <property type="nucleotide sequence ID" value="NC_008513.1"/>
</dbReference>
<dbReference type="SMR" id="Q057B0"/>
<dbReference type="STRING" id="372461.BCc_335"/>
<dbReference type="KEGG" id="bcc:BCc_335"/>
<dbReference type="eggNOG" id="COG0092">
    <property type="taxonomic scope" value="Bacteria"/>
</dbReference>
<dbReference type="HOGENOM" id="CLU_058591_0_2_6"/>
<dbReference type="OrthoDB" id="9806396at2"/>
<dbReference type="Proteomes" id="UP000000669">
    <property type="component" value="Chromosome"/>
</dbReference>
<dbReference type="GO" id="GO:0022627">
    <property type="term" value="C:cytosolic small ribosomal subunit"/>
    <property type="evidence" value="ECO:0007669"/>
    <property type="project" value="TreeGrafter"/>
</dbReference>
<dbReference type="GO" id="GO:0003729">
    <property type="term" value="F:mRNA binding"/>
    <property type="evidence" value="ECO:0007669"/>
    <property type="project" value="UniProtKB-UniRule"/>
</dbReference>
<dbReference type="GO" id="GO:0019843">
    <property type="term" value="F:rRNA binding"/>
    <property type="evidence" value="ECO:0007669"/>
    <property type="project" value="UniProtKB-UniRule"/>
</dbReference>
<dbReference type="GO" id="GO:0003735">
    <property type="term" value="F:structural constituent of ribosome"/>
    <property type="evidence" value="ECO:0007669"/>
    <property type="project" value="InterPro"/>
</dbReference>
<dbReference type="GO" id="GO:0006412">
    <property type="term" value="P:translation"/>
    <property type="evidence" value="ECO:0007669"/>
    <property type="project" value="UniProtKB-UniRule"/>
</dbReference>
<dbReference type="CDD" id="cd02412">
    <property type="entry name" value="KH-II_30S_S3"/>
    <property type="match status" value="1"/>
</dbReference>
<dbReference type="FunFam" id="3.30.1140.32:FF:000001">
    <property type="entry name" value="30S ribosomal protein S3"/>
    <property type="match status" value="1"/>
</dbReference>
<dbReference type="FunFam" id="3.30.300.20:FF:000001">
    <property type="entry name" value="30S ribosomal protein S3"/>
    <property type="match status" value="1"/>
</dbReference>
<dbReference type="Gene3D" id="3.30.300.20">
    <property type="match status" value="1"/>
</dbReference>
<dbReference type="Gene3D" id="3.30.1140.32">
    <property type="entry name" value="Ribosomal protein S3, C-terminal domain"/>
    <property type="match status" value="1"/>
</dbReference>
<dbReference type="HAMAP" id="MF_01309_B">
    <property type="entry name" value="Ribosomal_uS3_B"/>
    <property type="match status" value="1"/>
</dbReference>
<dbReference type="InterPro" id="IPR004087">
    <property type="entry name" value="KH_dom"/>
</dbReference>
<dbReference type="InterPro" id="IPR015946">
    <property type="entry name" value="KH_dom-like_a/b"/>
</dbReference>
<dbReference type="InterPro" id="IPR004044">
    <property type="entry name" value="KH_dom_type_2"/>
</dbReference>
<dbReference type="InterPro" id="IPR009019">
    <property type="entry name" value="KH_sf_prok-type"/>
</dbReference>
<dbReference type="InterPro" id="IPR036419">
    <property type="entry name" value="Ribosomal_S3_C_sf"/>
</dbReference>
<dbReference type="InterPro" id="IPR005704">
    <property type="entry name" value="Ribosomal_uS3_bac-typ"/>
</dbReference>
<dbReference type="InterPro" id="IPR001351">
    <property type="entry name" value="Ribosomal_uS3_C"/>
</dbReference>
<dbReference type="InterPro" id="IPR018280">
    <property type="entry name" value="Ribosomal_uS3_CS"/>
</dbReference>
<dbReference type="NCBIfam" id="TIGR01009">
    <property type="entry name" value="rpsC_bact"/>
    <property type="match status" value="1"/>
</dbReference>
<dbReference type="PANTHER" id="PTHR11760">
    <property type="entry name" value="30S/40S RIBOSOMAL PROTEIN S3"/>
    <property type="match status" value="1"/>
</dbReference>
<dbReference type="PANTHER" id="PTHR11760:SF19">
    <property type="entry name" value="SMALL RIBOSOMAL SUBUNIT PROTEIN US3C"/>
    <property type="match status" value="1"/>
</dbReference>
<dbReference type="Pfam" id="PF07650">
    <property type="entry name" value="KH_2"/>
    <property type="match status" value="1"/>
</dbReference>
<dbReference type="Pfam" id="PF00189">
    <property type="entry name" value="Ribosomal_S3_C"/>
    <property type="match status" value="1"/>
</dbReference>
<dbReference type="SMART" id="SM00322">
    <property type="entry name" value="KH"/>
    <property type="match status" value="1"/>
</dbReference>
<dbReference type="SUPFAM" id="SSF54814">
    <property type="entry name" value="Prokaryotic type KH domain (KH-domain type II)"/>
    <property type="match status" value="1"/>
</dbReference>
<dbReference type="SUPFAM" id="SSF54821">
    <property type="entry name" value="Ribosomal protein S3 C-terminal domain"/>
    <property type="match status" value="1"/>
</dbReference>
<dbReference type="PROSITE" id="PS50823">
    <property type="entry name" value="KH_TYPE_2"/>
    <property type="match status" value="1"/>
</dbReference>
<dbReference type="PROSITE" id="PS00548">
    <property type="entry name" value="RIBOSOMAL_S3"/>
    <property type="match status" value="1"/>
</dbReference>
<protein>
    <recommendedName>
        <fullName evidence="1">Small ribosomal subunit protein uS3</fullName>
    </recommendedName>
    <alternativeName>
        <fullName evidence="2">30S ribosomal protein S3</fullName>
    </alternativeName>
</protein>
<accession>Q057B0</accession>
<evidence type="ECO:0000255" key="1">
    <source>
        <dbReference type="HAMAP-Rule" id="MF_01309"/>
    </source>
</evidence>
<evidence type="ECO:0000305" key="2"/>
<name>RS3_BUCCC</name>
<reference key="1">
    <citation type="journal article" date="2006" name="Science">
        <title>A small microbial genome: the end of a long symbiotic relationship?</title>
        <authorList>
            <person name="Perez-Brocal V."/>
            <person name="Gil R."/>
            <person name="Ramos S."/>
            <person name="Lamelas A."/>
            <person name="Postigo M."/>
            <person name="Michelena J.M."/>
            <person name="Silva F.J."/>
            <person name="Moya A."/>
            <person name="Latorre A."/>
        </authorList>
    </citation>
    <scope>NUCLEOTIDE SEQUENCE [LARGE SCALE GENOMIC DNA]</scope>
    <source>
        <strain>Cc</strain>
    </source>
</reference>
<keyword id="KW-1185">Reference proteome</keyword>
<keyword id="KW-0687">Ribonucleoprotein</keyword>
<keyword id="KW-0689">Ribosomal protein</keyword>
<keyword id="KW-0694">RNA-binding</keyword>
<keyword id="KW-0699">rRNA-binding</keyword>
<comment type="function">
    <text evidence="1">Binds the lower part of the 30S subunit head. Binds mRNA in the 70S ribosome, positioning it for translation.</text>
</comment>
<comment type="subunit">
    <text evidence="1">Part of the 30S ribosomal subunit. Forms a tight complex with proteins S10 and S14.</text>
</comment>
<comment type="similarity">
    <text evidence="1">Belongs to the universal ribosomal protein uS3 family.</text>
</comment>
<feature type="chain" id="PRO_0000293761" description="Small ribosomal subunit protein uS3">
    <location>
        <begin position="1"/>
        <end position="235"/>
    </location>
</feature>
<feature type="domain" description="KH type-2" evidence="1">
    <location>
        <begin position="39"/>
        <end position="107"/>
    </location>
</feature>
<proteinExistence type="inferred from homology"/>
<organism>
    <name type="scientific">Buchnera aphidicola subsp. Cinara cedri (strain Cc)</name>
    <dbReference type="NCBI Taxonomy" id="372461"/>
    <lineage>
        <taxon>Bacteria</taxon>
        <taxon>Pseudomonadati</taxon>
        <taxon>Pseudomonadota</taxon>
        <taxon>Gammaproteobacteria</taxon>
        <taxon>Enterobacterales</taxon>
        <taxon>Erwiniaceae</taxon>
        <taxon>Buchnera</taxon>
    </lineage>
</organism>
<sequence>MGQKVHPNGMRLGIIKSWNSIWFASKKEFSNYLDSDFKVRSYVKKKLIKASVSKVIIERLSKNIRVTIYTARPGIVIGKKGEDVEKLRIEIAKITGVPAQVNISEIRKPELDAKLVADNISSQLERRVMFRRAIKRSVQNAMRQGAKGIKIEVSGRLGGVEIARREWYREGRVPLHTLRANIEYNTSEAHTTYGIIGVKVWIFKGEILDGMLVVSNKKDKKPFISVKKVSQKYRK</sequence>
<gene>
    <name evidence="1" type="primary">rpsC</name>
    <name type="ordered locus">BCc_335</name>
</gene>